<organism>
    <name type="scientific">Mycolicibacterium smegmatis (strain ATCC 700084 / mc(2)155)</name>
    <name type="common">Mycobacterium smegmatis</name>
    <dbReference type="NCBI Taxonomy" id="246196"/>
    <lineage>
        <taxon>Bacteria</taxon>
        <taxon>Bacillati</taxon>
        <taxon>Actinomycetota</taxon>
        <taxon>Actinomycetes</taxon>
        <taxon>Mycobacteriales</taxon>
        <taxon>Mycobacteriaceae</taxon>
        <taxon>Mycolicibacterium</taxon>
    </lineage>
</organism>
<comment type="function">
    <text evidence="1">Involved in coproporphyrin-dependent heme b biosynthesis. Catalyzes the insertion of ferrous iron into coproporphyrin III to form Fe-coproporphyrin III.</text>
</comment>
<comment type="catalytic activity">
    <reaction evidence="1">
        <text>Fe-coproporphyrin III + 2 H(+) = coproporphyrin III + Fe(2+)</text>
        <dbReference type="Rhea" id="RHEA:49572"/>
        <dbReference type="ChEBI" id="CHEBI:15378"/>
        <dbReference type="ChEBI" id="CHEBI:29033"/>
        <dbReference type="ChEBI" id="CHEBI:68438"/>
        <dbReference type="ChEBI" id="CHEBI:131725"/>
        <dbReference type="EC" id="4.99.1.9"/>
    </reaction>
    <physiologicalReaction direction="right-to-left" evidence="1">
        <dbReference type="Rhea" id="RHEA:49574"/>
    </physiologicalReaction>
</comment>
<comment type="pathway">
    <text evidence="1">Porphyrin-containing compound metabolism; protoheme biosynthesis.</text>
</comment>
<comment type="subcellular location">
    <subcellularLocation>
        <location evidence="1">Cytoplasm</location>
    </subcellularLocation>
</comment>
<comment type="similarity">
    <text evidence="1">Belongs to the ferrochelatase family.</text>
</comment>
<keyword id="KW-0963">Cytoplasm</keyword>
<keyword id="KW-0350">Heme biosynthesis</keyword>
<keyword id="KW-0408">Iron</keyword>
<keyword id="KW-0456">Lyase</keyword>
<keyword id="KW-0479">Metal-binding</keyword>
<keyword id="KW-0627">Porphyrin biosynthesis</keyword>
<keyword id="KW-1185">Reference proteome</keyword>
<sequence length="340" mass="36977">MSFDALLLLSFGGPEAPEQVMPFLENVTRGRGIPRERLESVAEHYLHFGGVSPINGINRDLIVAIEAELARRGRNLPVYFGNRNWEPYVEDTVKAMSDNGIRRAAVFATSAWGGYSGCAQYQEDIARGRAAAGPEAPELVKLRQYFDHPLFVEMFADAVADAAATLPEELRDEARLVFTAHSIPLRAASRCGADLYERQVGYAARLVAAAAGYREYDQVWQSRSGPPQVPWLEPDVGDHLEALARNGTRAVIVCPLGFVADHIEVVWDLDNELAEQAAEAGIAFARAATPNSQPRFAQLVVDLIDEMLHGLPPRRVEGPDPVPAYGSSVNGAPCTPACSA</sequence>
<protein>
    <recommendedName>
        <fullName evidence="1">Coproporphyrin III ferrochelatase</fullName>
        <ecNumber evidence="1">4.99.1.9</ecNumber>
    </recommendedName>
</protein>
<proteinExistence type="inferred from homology"/>
<reference key="1">
    <citation type="submission" date="2006-10" db="EMBL/GenBank/DDBJ databases">
        <authorList>
            <person name="Fleischmann R.D."/>
            <person name="Dodson R.J."/>
            <person name="Haft D.H."/>
            <person name="Merkel J.S."/>
            <person name="Nelson W.C."/>
            <person name="Fraser C.M."/>
        </authorList>
    </citation>
    <scope>NUCLEOTIDE SEQUENCE [LARGE SCALE GENOMIC DNA]</scope>
    <source>
        <strain>ATCC 700084 / mc(2)155</strain>
    </source>
</reference>
<reference key="2">
    <citation type="journal article" date="2007" name="Genome Biol.">
        <title>Interrupted coding sequences in Mycobacterium smegmatis: authentic mutations or sequencing errors?</title>
        <authorList>
            <person name="Deshayes C."/>
            <person name="Perrodou E."/>
            <person name="Gallien S."/>
            <person name="Euphrasie D."/>
            <person name="Schaeffer C."/>
            <person name="Van-Dorsselaer A."/>
            <person name="Poch O."/>
            <person name="Lecompte O."/>
            <person name="Reyrat J.-M."/>
        </authorList>
    </citation>
    <scope>NUCLEOTIDE SEQUENCE [LARGE SCALE GENOMIC DNA]</scope>
    <source>
        <strain>ATCC 700084 / mc(2)155</strain>
    </source>
</reference>
<reference key="3">
    <citation type="journal article" date="2009" name="Genome Res.">
        <title>Ortho-proteogenomics: multiple proteomes investigation through orthology and a new MS-based protocol.</title>
        <authorList>
            <person name="Gallien S."/>
            <person name="Perrodou E."/>
            <person name="Carapito C."/>
            <person name="Deshayes C."/>
            <person name="Reyrat J.-M."/>
            <person name="Van Dorsselaer A."/>
            <person name="Poch O."/>
            <person name="Schaeffer C."/>
            <person name="Lecompte O."/>
        </authorList>
    </citation>
    <scope>NUCLEOTIDE SEQUENCE [LARGE SCALE GENOMIC DNA]</scope>
    <source>
        <strain>ATCC 700084 / mc(2)155</strain>
    </source>
</reference>
<gene>
    <name evidence="1" type="primary">cpfC</name>
    <name type="ordered locus">MSMEG_3152</name>
    <name type="ordered locus">MSMEI_3071</name>
</gene>
<name>CPFC_MYCS2</name>
<accession>A0QX29</accession>
<accession>I7FDE6</accession>
<evidence type="ECO:0000255" key="1">
    <source>
        <dbReference type="HAMAP-Rule" id="MF_00323"/>
    </source>
</evidence>
<feature type="chain" id="PRO_1000019321" description="Coproporphyrin III ferrochelatase">
    <location>
        <begin position="1"/>
        <end position="340"/>
    </location>
</feature>
<feature type="binding site" evidence="1">
    <location>
        <position position="52"/>
    </location>
    <ligand>
        <name>Fe-coproporphyrin III</name>
        <dbReference type="ChEBI" id="CHEBI:68438"/>
    </ligand>
</feature>
<feature type="binding site" evidence="1">
    <location>
        <position position="121"/>
    </location>
    <ligand>
        <name>Fe-coproporphyrin III</name>
        <dbReference type="ChEBI" id="CHEBI:68438"/>
    </ligand>
</feature>
<feature type="binding site" evidence="1">
    <location>
        <position position="181"/>
    </location>
    <ligand>
        <name>Fe(2+)</name>
        <dbReference type="ChEBI" id="CHEBI:29033"/>
    </ligand>
</feature>
<feature type="binding site" evidence="1">
    <location>
        <position position="264"/>
    </location>
    <ligand>
        <name>Fe(2+)</name>
        <dbReference type="ChEBI" id="CHEBI:29033"/>
    </ligand>
</feature>
<dbReference type="EC" id="4.99.1.9" evidence="1"/>
<dbReference type="EMBL" id="CP000480">
    <property type="protein sequence ID" value="ABK73533.1"/>
    <property type="molecule type" value="Genomic_DNA"/>
</dbReference>
<dbReference type="EMBL" id="CP001663">
    <property type="protein sequence ID" value="AFP39535.1"/>
    <property type="molecule type" value="Genomic_DNA"/>
</dbReference>
<dbReference type="RefSeq" id="WP_011728851.1">
    <property type="nucleotide sequence ID" value="NZ_SIJM01000002.1"/>
</dbReference>
<dbReference type="RefSeq" id="YP_887467.1">
    <property type="nucleotide sequence ID" value="NC_008596.1"/>
</dbReference>
<dbReference type="SMR" id="A0QX29"/>
<dbReference type="STRING" id="246196.MSMEG_3152"/>
<dbReference type="PaxDb" id="246196-MSMEI_3071"/>
<dbReference type="KEGG" id="msb:LJ00_15675"/>
<dbReference type="KEGG" id="msg:MSMEI_3071"/>
<dbReference type="KEGG" id="msm:MSMEG_3152"/>
<dbReference type="PATRIC" id="fig|246196.19.peg.3113"/>
<dbReference type="eggNOG" id="COG0276">
    <property type="taxonomic scope" value="Bacteria"/>
</dbReference>
<dbReference type="OrthoDB" id="9776380at2"/>
<dbReference type="UniPathway" id="UPA00252"/>
<dbReference type="Proteomes" id="UP000000757">
    <property type="component" value="Chromosome"/>
</dbReference>
<dbReference type="Proteomes" id="UP000006158">
    <property type="component" value="Chromosome"/>
</dbReference>
<dbReference type="GO" id="GO:0005737">
    <property type="term" value="C:cytoplasm"/>
    <property type="evidence" value="ECO:0007669"/>
    <property type="project" value="UniProtKB-SubCell"/>
</dbReference>
<dbReference type="GO" id="GO:0004325">
    <property type="term" value="F:ferrochelatase activity"/>
    <property type="evidence" value="ECO:0007669"/>
    <property type="project" value="UniProtKB-UniRule"/>
</dbReference>
<dbReference type="GO" id="GO:0046872">
    <property type="term" value="F:metal ion binding"/>
    <property type="evidence" value="ECO:0007669"/>
    <property type="project" value="UniProtKB-KW"/>
</dbReference>
<dbReference type="GO" id="GO:0006783">
    <property type="term" value="P:heme biosynthetic process"/>
    <property type="evidence" value="ECO:0007669"/>
    <property type="project" value="UniProtKB-UniRule"/>
</dbReference>
<dbReference type="CDD" id="cd00419">
    <property type="entry name" value="Ferrochelatase_C"/>
    <property type="match status" value="1"/>
</dbReference>
<dbReference type="CDD" id="cd03411">
    <property type="entry name" value="Ferrochelatase_N"/>
    <property type="match status" value="1"/>
</dbReference>
<dbReference type="Gene3D" id="3.40.50.1400">
    <property type="match status" value="2"/>
</dbReference>
<dbReference type="HAMAP" id="MF_00323">
    <property type="entry name" value="Ferrochelatase"/>
    <property type="match status" value="1"/>
</dbReference>
<dbReference type="InterPro" id="IPR001015">
    <property type="entry name" value="Ferrochelatase"/>
</dbReference>
<dbReference type="InterPro" id="IPR033644">
    <property type="entry name" value="Ferrochelatase_C"/>
</dbReference>
<dbReference type="InterPro" id="IPR033659">
    <property type="entry name" value="Ferrochelatase_N"/>
</dbReference>
<dbReference type="NCBIfam" id="TIGR00109">
    <property type="entry name" value="hemH"/>
    <property type="match status" value="1"/>
</dbReference>
<dbReference type="NCBIfam" id="NF000689">
    <property type="entry name" value="PRK00035.2-1"/>
    <property type="match status" value="1"/>
</dbReference>
<dbReference type="PANTHER" id="PTHR11108">
    <property type="entry name" value="FERROCHELATASE"/>
    <property type="match status" value="1"/>
</dbReference>
<dbReference type="PANTHER" id="PTHR11108:SF1">
    <property type="entry name" value="FERROCHELATASE, MITOCHONDRIAL"/>
    <property type="match status" value="1"/>
</dbReference>
<dbReference type="Pfam" id="PF00762">
    <property type="entry name" value="Ferrochelatase"/>
    <property type="match status" value="1"/>
</dbReference>
<dbReference type="SUPFAM" id="SSF53800">
    <property type="entry name" value="Chelatase"/>
    <property type="match status" value="1"/>
</dbReference>